<organism>
    <name type="scientific">Bacillus anthracis</name>
    <dbReference type="NCBI Taxonomy" id="1392"/>
    <lineage>
        <taxon>Bacteria</taxon>
        <taxon>Bacillati</taxon>
        <taxon>Bacillota</taxon>
        <taxon>Bacilli</taxon>
        <taxon>Bacillales</taxon>
        <taxon>Bacillaceae</taxon>
        <taxon>Bacillus</taxon>
        <taxon>Bacillus cereus group</taxon>
    </lineage>
</organism>
<reference key="1">
    <citation type="journal article" date="2003" name="Nature">
        <title>The genome sequence of Bacillus anthracis Ames and comparison to closely related bacteria.</title>
        <authorList>
            <person name="Read T.D."/>
            <person name="Peterson S.N."/>
            <person name="Tourasse N.J."/>
            <person name="Baillie L.W."/>
            <person name="Paulsen I.T."/>
            <person name="Nelson K.E."/>
            <person name="Tettelin H."/>
            <person name="Fouts D.E."/>
            <person name="Eisen J.A."/>
            <person name="Gill S.R."/>
            <person name="Holtzapple E.K."/>
            <person name="Okstad O.A."/>
            <person name="Helgason E."/>
            <person name="Rilstone J."/>
            <person name="Wu M."/>
            <person name="Kolonay J.F."/>
            <person name="Beanan M.J."/>
            <person name="Dodson R.J."/>
            <person name="Brinkac L.M."/>
            <person name="Gwinn M.L."/>
            <person name="DeBoy R.T."/>
            <person name="Madpu R."/>
            <person name="Daugherty S.C."/>
            <person name="Durkin A.S."/>
            <person name="Haft D.H."/>
            <person name="Nelson W.C."/>
            <person name="Peterson J.D."/>
            <person name="Pop M."/>
            <person name="Khouri H.M."/>
            <person name="Radune D."/>
            <person name="Benton J.L."/>
            <person name="Mahamoud Y."/>
            <person name="Jiang L."/>
            <person name="Hance I.R."/>
            <person name="Weidman J.F."/>
            <person name="Berry K.J."/>
            <person name="Plaut R.D."/>
            <person name="Wolf A.M."/>
            <person name="Watkins K.L."/>
            <person name="Nierman W.C."/>
            <person name="Hazen A."/>
            <person name="Cline R.T."/>
            <person name="Redmond C."/>
            <person name="Thwaite J.E."/>
            <person name="White O."/>
            <person name="Salzberg S.L."/>
            <person name="Thomason B."/>
            <person name="Friedlander A.M."/>
            <person name="Koehler T.M."/>
            <person name="Hanna P.C."/>
            <person name="Kolstoe A.-B."/>
            <person name="Fraser C.M."/>
        </authorList>
    </citation>
    <scope>NUCLEOTIDE SEQUENCE [LARGE SCALE GENOMIC DNA]</scope>
    <source>
        <strain>Ames / isolate Porton</strain>
    </source>
</reference>
<reference key="2">
    <citation type="journal article" date="2009" name="J. Bacteriol.">
        <title>The complete genome sequence of Bacillus anthracis Ames 'Ancestor'.</title>
        <authorList>
            <person name="Ravel J."/>
            <person name="Jiang L."/>
            <person name="Stanley S.T."/>
            <person name="Wilson M.R."/>
            <person name="Decker R.S."/>
            <person name="Read T.D."/>
            <person name="Worsham P."/>
            <person name="Keim P.S."/>
            <person name="Salzberg S.L."/>
            <person name="Fraser-Liggett C.M."/>
            <person name="Rasko D.A."/>
        </authorList>
    </citation>
    <scope>NUCLEOTIDE SEQUENCE [LARGE SCALE GENOMIC DNA]</scope>
    <source>
        <strain>Ames ancestor</strain>
    </source>
</reference>
<reference key="3">
    <citation type="submission" date="2004-01" db="EMBL/GenBank/DDBJ databases">
        <title>Complete genome sequence of Bacillus anthracis Sterne.</title>
        <authorList>
            <person name="Brettin T.S."/>
            <person name="Bruce D."/>
            <person name="Challacombe J.F."/>
            <person name="Gilna P."/>
            <person name="Han C."/>
            <person name="Hill K."/>
            <person name="Hitchcock P."/>
            <person name="Jackson P."/>
            <person name="Keim P."/>
            <person name="Longmire J."/>
            <person name="Lucas S."/>
            <person name="Okinaka R."/>
            <person name="Richardson P."/>
            <person name="Rubin E."/>
            <person name="Tice H."/>
        </authorList>
    </citation>
    <scope>NUCLEOTIDE SEQUENCE [LARGE SCALE GENOMIC DNA]</scope>
    <source>
        <strain>Sterne</strain>
    </source>
</reference>
<accession>Q81W73</accession>
<accession>Q6HUC0</accession>
<accession>Q6KNK7</accession>
<feature type="chain" id="PRO_0000164023" description="Metallothiol transferase FosB 2">
    <location>
        <begin position="1"/>
        <end position="139"/>
    </location>
</feature>
<feature type="domain" description="VOC" evidence="2">
    <location>
        <begin position="4"/>
        <end position="119"/>
    </location>
</feature>
<feature type="active site" description="Proton donor/acceptor" evidence="2">
    <location>
        <position position="115"/>
    </location>
</feature>
<feature type="binding site" evidence="1">
    <location>
        <position position="7"/>
    </location>
    <ligand>
        <name>Mg(2+)</name>
        <dbReference type="ChEBI" id="CHEBI:18420"/>
    </ligand>
</feature>
<feature type="binding site" evidence="1">
    <location>
        <position position="66"/>
    </location>
    <ligand>
        <name>Mg(2+)</name>
        <dbReference type="ChEBI" id="CHEBI:18420"/>
    </ligand>
</feature>
<feature type="binding site" evidence="1">
    <location>
        <position position="115"/>
    </location>
    <ligand>
        <name>Mg(2+)</name>
        <dbReference type="ChEBI" id="CHEBI:18420"/>
    </ligand>
</feature>
<feature type="strand" evidence="3">
    <location>
        <begin position="7"/>
        <end position="13"/>
    </location>
</feature>
<feature type="helix" evidence="3">
    <location>
        <begin position="15"/>
        <end position="24"/>
    </location>
</feature>
<feature type="strand" evidence="3">
    <location>
        <begin position="29"/>
        <end position="33"/>
    </location>
</feature>
<feature type="strand" evidence="3">
    <location>
        <begin position="35"/>
        <end position="42"/>
    </location>
</feature>
<feature type="strand" evidence="3">
    <location>
        <begin position="45"/>
        <end position="51"/>
    </location>
</feature>
<feature type="helix" evidence="3">
    <location>
        <begin position="59"/>
        <end position="62"/>
    </location>
</feature>
<feature type="strand" evidence="3">
    <location>
        <begin position="66"/>
        <end position="70"/>
    </location>
</feature>
<feature type="helix" evidence="3">
    <location>
        <begin position="73"/>
        <end position="85"/>
    </location>
</feature>
<feature type="strand" evidence="3">
    <location>
        <begin position="89"/>
        <end position="91"/>
    </location>
</feature>
<feature type="helix" evidence="3">
    <location>
        <begin position="98"/>
        <end position="100"/>
    </location>
</feature>
<feature type="strand" evidence="3">
    <location>
        <begin position="103"/>
        <end position="107"/>
    </location>
</feature>
<feature type="strand" evidence="3">
    <location>
        <begin position="113"/>
        <end position="117"/>
    </location>
</feature>
<feature type="helix" evidence="3">
    <location>
        <begin position="121"/>
        <end position="131"/>
    </location>
</feature>
<sequence>MLQGINHICFSVSNLEKSIEFYQKILQAKLLVKGRKLAYFDLNGLWIALNVEEDIPRNEIKQSYTHMAFTVTNEALDHLKEVLIQNDVNILPGRERDERDQRSLYFTDPDGHKFEFHTGTLQNRLEYYKEDKKHMTFYI</sequence>
<dbReference type="EC" id="2.5.1.-" evidence="1"/>
<dbReference type="EMBL" id="AE016879">
    <property type="protein sequence ID" value="AAP27834.1"/>
    <property type="molecule type" value="Genomic_DNA"/>
</dbReference>
<dbReference type="EMBL" id="AE017334">
    <property type="protein sequence ID" value="AAT33228.1"/>
    <property type="molecule type" value="Genomic_DNA"/>
</dbReference>
<dbReference type="EMBL" id="AE017225">
    <property type="protein sequence ID" value="AAT56119.1"/>
    <property type="molecule type" value="Genomic_DNA"/>
</dbReference>
<dbReference type="RefSeq" id="NP_846348.1">
    <property type="nucleotide sequence ID" value="NC_003997.3"/>
</dbReference>
<dbReference type="RefSeq" id="YP_030068.1">
    <property type="nucleotide sequence ID" value="NC_005945.1"/>
</dbReference>
<dbReference type="PDB" id="4IR0">
    <property type="method" value="X-ray"/>
    <property type="resolution" value="1.60 A"/>
    <property type="chains" value="A/B=1-139"/>
</dbReference>
<dbReference type="PDB" id="4JD1">
    <property type="method" value="X-ray"/>
    <property type="resolution" value="1.70 A"/>
    <property type="chains" value="A/B=1-139"/>
</dbReference>
<dbReference type="PDB" id="5F6Q">
    <property type="method" value="X-ray"/>
    <property type="resolution" value="1.52 A"/>
    <property type="chains" value="A/B=1-139"/>
</dbReference>
<dbReference type="PDBsum" id="4IR0"/>
<dbReference type="PDBsum" id="4JD1"/>
<dbReference type="PDBsum" id="5F6Q"/>
<dbReference type="SMR" id="Q81W73"/>
<dbReference type="STRING" id="261594.GBAA_4109"/>
<dbReference type="CARD" id="ARO:3005100">
    <property type="molecule name" value="FosB2"/>
    <property type="mechanism identifier" value="ARO:0001004"/>
    <property type="mechanism name" value="antibiotic inactivation"/>
</dbReference>
<dbReference type="DNASU" id="1086311"/>
<dbReference type="GeneID" id="45023793"/>
<dbReference type="KEGG" id="ban:BA_4109"/>
<dbReference type="KEGG" id="bar:GBAA_4109"/>
<dbReference type="KEGG" id="bat:BAS3818"/>
<dbReference type="PATRIC" id="fig|198094.11.peg.4079"/>
<dbReference type="eggNOG" id="COG0346">
    <property type="taxonomic scope" value="Bacteria"/>
</dbReference>
<dbReference type="HOGENOM" id="CLU_121356_0_0_9"/>
<dbReference type="OMA" id="DIWVAIM"/>
<dbReference type="OrthoDB" id="192739at2"/>
<dbReference type="EvolutionaryTrace" id="Q81W73"/>
<dbReference type="Proteomes" id="UP000000427">
    <property type="component" value="Chromosome"/>
</dbReference>
<dbReference type="Proteomes" id="UP000000594">
    <property type="component" value="Chromosome"/>
</dbReference>
<dbReference type="GO" id="GO:0005737">
    <property type="term" value="C:cytoplasm"/>
    <property type="evidence" value="ECO:0007669"/>
    <property type="project" value="UniProtKB-SubCell"/>
</dbReference>
<dbReference type="GO" id="GO:0000287">
    <property type="term" value="F:magnesium ion binding"/>
    <property type="evidence" value="ECO:0007669"/>
    <property type="project" value="UniProtKB-UniRule"/>
</dbReference>
<dbReference type="GO" id="GO:0016765">
    <property type="term" value="F:transferase activity, transferring alkyl or aryl (other than methyl) groups"/>
    <property type="evidence" value="ECO:0007669"/>
    <property type="project" value="UniProtKB-UniRule"/>
</dbReference>
<dbReference type="GO" id="GO:0046677">
    <property type="term" value="P:response to antibiotic"/>
    <property type="evidence" value="ECO:0007669"/>
    <property type="project" value="UniProtKB-UniRule"/>
</dbReference>
<dbReference type="CDD" id="cd08363">
    <property type="entry name" value="FosB"/>
    <property type="match status" value="1"/>
</dbReference>
<dbReference type="FunFam" id="3.10.180.10:FF:000015">
    <property type="entry name" value="Metallothiol transferase FosB"/>
    <property type="match status" value="1"/>
</dbReference>
<dbReference type="Gene3D" id="3.10.180.10">
    <property type="entry name" value="2,3-Dihydroxybiphenyl 1,2-Dioxygenase, domain 1"/>
    <property type="match status" value="1"/>
</dbReference>
<dbReference type="HAMAP" id="MF_01512">
    <property type="entry name" value="FosB"/>
    <property type="match status" value="1"/>
</dbReference>
<dbReference type="InterPro" id="IPR051332">
    <property type="entry name" value="Fosfomycin_Res_Enzymes"/>
</dbReference>
<dbReference type="InterPro" id="IPR029068">
    <property type="entry name" value="Glyas_Bleomycin-R_OHBP_Dase"/>
</dbReference>
<dbReference type="InterPro" id="IPR004360">
    <property type="entry name" value="Glyas_Fos-R_dOase_dom"/>
</dbReference>
<dbReference type="InterPro" id="IPR022858">
    <property type="entry name" value="Metallothiol_Trafse_FosB"/>
</dbReference>
<dbReference type="InterPro" id="IPR037523">
    <property type="entry name" value="VOC"/>
</dbReference>
<dbReference type="NCBIfam" id="NF000493">
    <property type="entry name" value="Fos_BSH"/>
    <property type="match status" value="1"/>
</dbReference>
<dbReference type="NCBIfam" id="NF003152">
    <property type="entry name" value="PRK04101.1"/>
    <property type="match status" value="1"/>
</dbReference>
<dbReference type="PANTHER" id="PTHR36113:SF6">
    <property type="entry name" value="FOSFOMYCIN RESISTANCE PROTEIN FOSX"/>
    <property type="match status" value="1"/>
</dbReference>
<dbReference type="PANTHER" id="PTHR36113">
    <property type="entry name" value="LYASE, PUTATIVE-RELATED-RELATED"/>
    <property type="match status" value="1"/>
</dbReference>
<dbReference type="Pfam" id="PF00903">
    <property type="entry name" value="Glyoxalase"/>
    <property type="match status" value="1"/>
</dbReference>
<dbReference type="SUPFAM" id="SSF54593">
    <property type="entry name" value="Glyoxalase/Bleomycin resistance protein/Dihydroxybiphenyl dioxygenase"/>
    <property type="match status" value="1"/>
</dbReference>
<dbReference type="PROSITE" id="PS51819">
    <property type="entry name" value="VOC"/>
    <property type="match status" value="1"/>
</dbReference>
<name>FOSB2_BACAN</name>
<protein>
    <recommendedName>
        <fullName evidence="1">Metallothiol transferase FosB 2</fullName>
        <ecNumber evidence="1">2.5.1.-</ecNumber>
    </recommendedName>
    <alternativeName>
        <fullName evidence="1">Fosfomycin resistance protein 2</fullName>
    </alternativeName>
</protein>
<comment type="function">
    <text evidence="1">Metallothiol transferase which confers resistance to fosfomycin by catalyzing the addition of a thiol cofactor to fosfomycin. L-cysteine is probably the physiological thiol donor.</text>
</comment>
<comment type="cofactor">
    <cofactor evidence="1">
        <name>Mg(2+)</name>
        <dbReference type="ChEBI" id="CHEBI:18420"/>
    </cofactor>
</comment>
<comment type="subunit">
    <text evidence="1">Homodimer.</text>
</comment>
<comment type="subcellular location">
    <subcellularLocation>
        <location evidence="1">Cytoplasm</location>
    </subcellularLocation>
</comment>
<comment type="similarity">
    <text evidence="1">Belongs to the fosfomycin resistance protein family. FosB subfamily.</text>
</comment>
<evidence type="ECO:0000255" key="1">
    <source>
        <dbReference type="HAMAP-Rule" id="MF_01512"/>
    </source>
</evidence>
<evidence type="ECO:0000255" key="2">
    <source>
        <dbReference type="PROSITE-ProRule" id="PRU01163"/>
    </source>
</evidence>
<evidence type="ECO:0007829" key="3">
    <source>
        <dbReference type="PDB" id="5F6Q"/>
    </source>
</evidence>
<keyword id="KW-0002">3D-structure</keyword>
<keyword id="KW-0046">Antibiotic resistance</keyword>
<keyword id="KW-0963">Cytoplasm</keyword>
<keyword id="KW-0460">Magnesium</keyword>
<keyword id="KW-0479">Metal-binding</keyword>
<keyword id="KW-1185">Reference proteome</keyword>
<keyword id="KW-0808">Transferase</keyword>
<proteinExistence type="evidence at protein level"/>
<gene>
    <name evidence="1" type="primary">fosB2</name>
    <name type="synonym">fosB-2</name>
    <name type="ordered locus">BA_4109</name>
    <name type="ordered locus">GBAA_4109</name>
    <name type="ordered locus">BAS3818</name>
</gene>